<comment type="function">
    <text evidence="4">Facilitates RNA binding of SUB2 and likely plays a role in mRNA export (PubMed:37578863). Suppressor of the transcriptional defect of HPR1 by overexpression.</text>
</comment>
<comment type="subunit">
    <text evidence="4">Interacts with SUB2 in the presence of RNA; this interaction facilitates RNA binding of SUB2.</text>
</comment>
<comment type="miscellaneous">
    <text evidence="3">Present with 6580 molecules/cell in log phase SD medium.</text>
</comment>
<comment type="similarity">
    <text evidence="5">Belongs to the SAP domain-containing ribonucleoprotein family.</text>
</comment>
<reference key="1">
    <citation type="journal article" date="1997" name="Nature">
        <title>The nucleotide sequence of Saccharomyces cerevisiae chromosome V.</title>
        <authorList>
            <person name="Dietrich F.S."/>
            <person name="Mulligan J.T."/>
            <person name="Hennessy K.M."/>
            <person name="Yelton M.A."/>
            <person name="Allen E."/>
            <person name="Araujo R."/>
            <person name="Aviles E."/>
            <person name="Berno A."/>
            <person name="Brennan T."/>
            <person name="Carpenter J."/>
            <person name="Chen E."/>
            <person name="Cherry J.M."/>
            <person name="Chung E."/>
            <person name="Duncan M."/>
            <person name="Guzman E."/>
            <person name="Hartzell G."/>
            <person name="Hunicke-Smith S."/>
            <person name="Hyman R.W."/>
            <person name="Kayser A."/>
            <person name="Komp C."/>
            <person name="Lashkari D."/>
            <person name="Lew H."/>
            <person name="Lin D."/>
            <person name="Mosedale D."/>
            <person name="Nakahara K."/>
            <person name="Namath A."/>
            <person name="Norgren R."/>
            <person name="Oefner P."/>
            <person name="Oh C."/>
            <person name="Petel F.X."/>
            <person name="Roberts D."/>
            <person name="Sehl P."/>
            <person name="Schramm S."/>
            <person name="Shogren T."/>
            <person name="Smith V."/>
            <person name="Taylor P."/>
            <person name="Wei Y."/>
            <person name="Botstein D."/>
            <person name="Davis R.W."/>
        </authorList>
    </citation>
    <scope>NUCLEOTIDE SEQUENCE [LARGE SCALE GENOMIC DNA]</scope>
    <source>
        <strain>ATCC 204508 / S288c</strain>
    </source>
</reference>
<reference key="2">
    <citation type="journal article" date="2014" name="G3 (Bethesda)">
        <title>The reference genome sequence of Saccharomyces cerevisiae: Then and now.</title>
        <authorList>
            <person name="Engel S.R."/>
            <person name="Dietrich F.S."/>
            <person name="Fisk D.G."/>
            <person name="Binkley G."/>
            <person name="Balakrishnan R."/>
            <person name="Costanzo M.C."/>
            <person name="Dwight S.S."/>
            <person name="Hitz B.C."/>
            <person name="Karra K."/>
            <person name="Nash R.S."/>
            <person name="Weng S."/>
            <person name="Wong E.D."/>
            <person name="Lloyd P."/>
            <person name="Skrzypek M.S."/>
            <person name="Miyasato S.R."/>
            <person name="Simison M."/>
            <person name="Cherry J.M."/>
        </authorList>
    </citation>
    <scope>GENOME REANNOTATION</scope>
    <source>
        <strain>ATCC 204508 / S288c</strain>
    </source>
</reference>
<reference key="3">
    <citation type="journal article" date="2007" name="Genome Res.">
        <title>Approaching a complete repository of sequence-verified protein-encoding clones for Saccharomyces cerevisiae.</title>
        <authorList>
            <person name="Hu Y."/>
            <person name="Rolfs A."/>
            <person name="Bhullar B."/>
            <person name="Murthy T.V.S."/>
            <person name="Zhu C."/>
            <person name="Berger M.F."/>
            <person name="Camargo A.A."/>
            <person name="Kelley F."/>
            <person name="McCarron S."/>
            <person name="Jepson D."/>
            <person name="Richardson A."/>
            <person name="Raphael J."/>
            <person name="Moreira D."/>
            <person name="Taycher E."/>
            <person name="Zuo D."/>
            <person name="Mohr S."/>
            <person name="Kane M.F."/>
            <person name="Williamson J."/>
            <person name="Simpson A.J.G."/>
            <person name="Bulyk M.L."/>
            <person name="Harlow E."/>
            <person name="Marsischky G."/>
            <person name="Kolodner R.D."/>
            <person name="LaBaer J."/>
        </authorList>
    </citation>
    <scope>NUCLEOTIDE SEQUENCE [GENOMIC DNA]</scope>
    <source>
        <strain>ATCC 204508 / S288c</strain>
    </source>
</reference>
<reference key="4">
    <citation type="journal article" date="1998" name="EMBO J.">
        <title>A novel yeast gene, THO2, is involved in RNA pol II transcription and provides new evidence for transcriptional elongation-associated recombination.</title>
        <authorList>
            <person name="Piruat J.I."/>
            <person name="Aguilera A."/>
        </authorList>
    </citation>
    <scope>CHARACTERIZATION</scope>
</reference>
<reference key="5">
    <citation type="journal article" date="2003" name="Nature">
        <title>Global analysis of protein expression in yeast.</title>
        <authorList>
            <person name="Ghaemmaghami S."/>
            <person name="Huh W.-K."/>
            <person name="Bower K."/>
            <person name="Howson R.W."/>
            <person name="Belle A."/>
            <person name="Dephoure N."/>
            <person name="O'Shea E.K."/>
            <person name="Weissman J.S."/>
        </authorList>
    </citation>
    <scope>LEVEL OF PROTEIN EXPRESSION [LARGE SCALE ANALYSIS]</scope>
</reference>
<reference key="6">
    <citation type="journal article" date="2008" name="Mol. Cell. Proteomics">
        <title>A multidimensional chromatography technology for in-depth phosphoproteome analysis.</title>
        <authorList>
            <person name="Albuquerque C.P."/>
            <person name="Smolka M.B."/>
            <person name="Payne S.H."/>
            <person name="Bafna V."/>
            <person name="Eng J."/>
            <person name="Zhou H."/>
        </authorList>
    </citation>
    <scope>PHOSPHORYLATION [LARGE SCALE ANALYSIS] AT SER-22</scope>
    <scope>IDENTIFICATION BY MASS SPECTROMETRY [LARGE SCALE ANALYSIS]</scope>
</reference>
<reference key="7">
    <citation type="journal article" date="2009" name="Science">
        <title>Global analysis of Cdk1 substrate phosphorylation sites provides insights into evolution.</title>
        <authorList>
            <person name="Holt L.J."/>
            <person name="Tuch B.B."/>
            <person name="Villen J."/>
            <person name="Johnson A.D."/>
            <person name="Gygi S.P."/>
            <person name="Morgan D.O."/>
        </authorList>
    </citation>
    <scope>PHOSPHORYLATION [LARGE SCALE ANALYSIS] AT SER-58 AND SER-68</scope>
    <scope>IDENTIFICATION BY MASS SPECTROMETRY [LARGE SCALE ANALYSIS]</scope>
</reference>
<reference key="8">
    <citation type="journal article" date="2012" name="Proc. Natl. Acad. Sci. U.S.A.">
        <title>N-terminal acetylome analyses and functional insights of the N-terminal acetyltransferase NatB.</title>
        <authorList>
            <person name="Van Damme P."/>
            <person name="Lasa M."/>
            <person name="Polevoda B."/>
            <person name="Gazquez C."/>
            <person name="Elosegui-Artola A."/>
            <person name="Kim D.S."/>
            <person name="De Juan-Pardo E."/>
            <person name="Demeyer K."/>
            <person name="Hole K."/>
            <person name="Larrea E."/>
            <person name="Timmerman E."/>
            <person name="Prieto J."/>
            <person name="Arnesen T."/>
            <person name="Sherman F."/>
            <person name="Gevaert K."/>
            <person name="Aldabe R."/>
        </authorList>
    </citation>
    <scope>IDENTIFICATION BY MASS SPECTROMETRY [LARGE SCALE ANALYSIS]</scope>
</reference>
<reference evidence="6" key="9">
    <citation type="journal article" date="2023" name="Cell Rep.">
        <title>Structural basis for high-order complex of SARNP and DDX39B to facilitate mRNP assembly.</title>
        <authorList>
            <person name="Xie Y."/>
            <person name="Gao S."/>
            <person name="Zhang K."/>
            <person name="Bhat P."/>
            <person name="Clarke B.P."/>
            <person name="Batten K."/>
            <person name="Mei M."/>
            <person name="Gazzara M."/>
            <person name="Shay J.W."/>
            <person name="Lynch K.W."/>
            <person name="Angelos A.E."/>
            <person name="Hill P.S."/>
            <person name="Ivey A.L."/>
            <person name="Fontoura B.M.A."/>
            <person name="Ren Y."/>
        </authorList>
    </citation>
    <scope>X-RAY CRYSTALLOGRAPHY (2.50 ANGSTROMS) OF 123-178 IN COMPLEX WITH HUMAN DDX39B; RNA AND ADP</scope>
    <scope>FUNCTION</scope>
    <scope>INTERACTION WITH SUB2</scope>
</reference>
<gene>
    <name type="primary">THO1</name>
    <name type="ordered locus">YER063W</name>
</gene>
<keyword id="KW-0002">3D-structure</keyword>
<keyword id="KW-0597">Phosphoprotein</keyword>
<keyword id="KW-1185">Reference proteome</keyword>
<sequence>MADYSSLTVVQLKDLLTKRNLSVGGLKNELVQRLIKDDEESKGESEVSPQEQNQEQGSEPAAIEEPASQNITEKKEVSSEPKETNEPKEENKDVQKPSDGPSATASENEQAAASTAAPALSPEEIKAKALDLLNKKLHRANKFGQDQADIDSLQRQINRVEKFGVDLNSKLAEELGLVSRKNEPESGNNGKFKNRNKNANNRSRVSKNRRGNRSGYRR</sequence>
<organism>
    <name type="scientific">Saccharomyces cerevisiae (strain ATCC 204508 / S288c)</name>
    <name type="common">Baker's yeast</name>
    <dbReference type="NCBI Taxonomy" id="559292"/>
    <lineage>
        <taxon>Eukaryota</taxon>
        <taxon>Fungi</taxon>
        <taxon>Dikarya</taxon>
        <taxon>Ascomycota</taxon>
        <taxon>Saccharomycotina</taxon>
        <taxon>Saccharomycetes</taxon>
        <taxon>Saccharomycetales</taxon>
        <taxon>Saccharomycetaceae</taxon>
        <taxon>Saccharomyces</taxon>
    </lineage>
</organism>
<protein>
    <recommendedName>
        <fullName>Protein THO1</fullName>
    </recommendedName>
</protein>
<evidence type="ECO:0000255" key="1">
    <source>
        <dbReference type="PROSITE-ProRule" id="PRU00186"/>
    </source>
</evidence>
<evidence type="ECO:0000256" key="2">
    <source>
        <dbReference type="SAM" id="MobiDB-lite"/>
    </source>
</evidence>
<evidence type="ECO:0000269" key="3">
    <source>
    </source>
</evidence>
<evidence type="ECO:0000269" key="4">
    <source>
    </source>
</evidence>
<evidence type="ECO:0000305" key="5"/>
<evidence type="ECO:0007744" key="6">
    <source>
        <dbReference type="PDB" id="8ENK"/>
    </source>
</evidence>
<evidence type="ECO:0007744" key="7">
    <source>
    </source>
</evidence>
<evidence type="ECO:0007744" key="8">
    <source>
    </source>
</evidence>
<evidence type="ECO:0007829" key="9">
    <source>
        <dbReference type="PDB" id="1H1J"/>
    </source>
</evidence>
<evidence type="ECO:0007829" key="10">
    <source>
        <dbReference type="PDB" id="8ENK"/>
    </source>
</evidence>
<feature type="chain" id="PRO_0000072519" description="Protein THO1">
    <location>
        <begin position="1"/>
        <end position="218"/>
    </location>
</feature>
<feature type="domain" description="SAP" evidence="1">
    <location>
        <begin position="4"/>
        <end position="38"/>
    </location>
</feature>
<feature type="region of interest" description="Disordered" evidence="2">
    <location>
        <begin position="37"/>
        <end position="123"/>
    </location>
</feature>
<feature type="region of interest" description="Disordered" evidence="2">
    <location>
        <begin position="177"/>
        <end position="218"/>
    </location>
</feature>
<feature type="compositionally biased region" description="Polar residues" evidence="2">
    <location>
        <begin position="47"/>
        <end position="57"/>
    </location>
</feature>
<feature type="compositionally biased region" description="Basic and acidic residues" evidence="2">
    <location>
        <begin position="72"/>
        <end position="96"/>
    </location>
</feature>
<feature type="compositionally biased region" description="Low complexity" evidence="2">
    <location>
        <begin position="102"/>
        <end position="122"/>
    </location>
</feature>
<feature type="compositionally biased region" description="Low complexity" evidence="2">
    <location>
        <begin position="186"/>
        <end position="203"/>
    </location>
</feature>
<feature type="compositionally biased region" description="Basic residues" evidence="2">
    <location>
        <begin position="204"/>
        <end position="218"/>
    </location>
</feature>
<feature type="modified residue" description="Phosphoserine" evidence="7">
    <location>
        <position position="22"/>
    </location>
</feature>
<feature type="modified residue" description="Phosphoserine" evidence="8">
    <location>
        <position position="58"/>
    </location>
</feature>
<feature type="modified residue" description="Phosphoserine" evidence="8">
    <location>
        <position position="68"/>
    </location>
</feature>
<feature type="helix" evidence="9">
    <location>
        <begin position="4"/>
        <end position="6"/>
    </location>
</feature>
<feature type="helix" evidence="9">
    <location>
        <begin position="9"/>
        <end position="18"/>
    </location>
</feature>
<feature type="helix" evidence="9">
    <location>
        <begin position="27"/>
        <end position="40"/>
    </location>
</feature>
<feature type="helix" evidence="10">
    <location>
        <begin position="124"/>
        <end position="142"/>
    </location>
</feature>
<feature type="helix" evidence="10">
    <location>
        <begin position="147"/>
        <end position="162"/>
    </location>
</feature>
<feature type="helix" evidence="10">
    <location>
        <begin position="170"/>
        <end position="174"/>
    </location>
</feature>
<dbReference type="EMBL" id="U18813">
    <property type="protein sequence ID" value="AAB64599.1"/>
    <property type="molecule type" value="Genomic_DNA"/>
</dbReference>
<dbReference type="EMBL" id="AY557779">
    <property type="protein sequence ID" value="AAS56105.1"/>
    <property type="molecule type" value="Genomic_DNA"/>
</dbReference>
<dbReference type="EMBL" id="BK006939">
    <property type="protein sequence ID" value="DAA07722.1"/>
    <property type="molecule type" value="Genomic_DNA"/>
</dbReference>
<dbReference type="PIR" id="S50566">
    <property type="entry name" value="S50566"/>
</dbReference>
<dbReference type="RefSeq" id="NP_010985.1">
    <property type="nucleotide sequence ID" value="NM_001178954.1"/>
</dbReference>
<dbReference type="PDB" id="1H1J">
    <property type="method" value="NMR"/>
    <property type="chains" value="S=2-50"/>
</dbReference>
<dbReference type="PDB" id="2WQG">
    <property type="method" value="NMR"/>
    <property type="chains" value="A=2-50"/>
</dbReference>
<dbReference type="PDB" id="4UZW">
    <property type="method" value="NMR"/>
    <property type="chains" value="A=2-50"/>
</dbReference>
<dbReference type="PDB" id="4UZX">
    <property type="method" value="NMR"/>
    <property type="chains" value="A=119-183"/>
</dbReference>
<dbReference type="PDB" id="8ENK">
    <property type="method" value="X-ray"/>
    <property type="resolution" value="2.50 A"/>
    <property type="chains" value="E=123-178"/>
</dbReference>
<dbReference type="PDBsum" id="1H1J"/>
<dbReference type="PDBsum" id="2WQG"/>
<dbReference type="PDBsum" id="4UZW"/>
<dbReference type="PDBsum" id="4UZX"/>
<dbReference type="PDBsum" id="8ENK"/>
<dbReference type="BMRB" id="P40040"/>
<dbReference type="SMR" id="P40040"/>
<dbReference type="BioGRID" id="36805">
    <property type="interactions" value="81"/>
</dbReference>
<dbReference type="DIP" id="DIP-3983N"/>
<dbReference type="FunCoup" id="P40040">
    <property type="interactions" value="60"/>
</dbReference>
<dbReference type="IntAct" id="P40040">
    <property type="interactions" value="19"/>
</dbReference>
<dbReference type="MINT" id="P40040"/>
<dbReference type="STRING" id="4932.YER063W"/>
<dbReference type="iPTMnet" id="P40040"/>
<dbReference type="PaxDb" id="4932-YER063W"/>
<dbReference type="PeptideAtlas" id="P40040"/>
<dbReference type="EnsemblFungi" id="YER063W_mRNA">
    <property type="protein sequence ID" value="YER063W"/>
    <property type="gene ID" value="YER063W"/>
</dbReference>
<dbReference type="GeneID" id="856792"/>
<dbReference type="KEGG" id="sce:YER063W"/>
<dbReference type="AGR" id="SGD:S000000865"/>
<dbReference type="SGD" id="S000000865">
    <property type="gene designation" value="THO1"/>
</dbReference>
<dbReference type="VEuPathDB" id="FungiDB:YER063W"/>
<dbReference type="eggNOG" id="ENOG502SARN">
    <property type="taxonomic scope" value="Eukaryota"/>
</dbReference>
<dbReference type="HOGENOM" id="CLU_088651_1_0_1"/>
<dbReference type="InParanoid" id="P40040"/>
<dbReference type="OMA" id="WSEKDNA"/>
<dbReference type="OrthoDB" id="445357at2759"/>
<dbReference type="BioCyc" id="YEAST:G3O-30238-MONOMER"/>
<dbReference type="BioGRID-ORCS" id="856792">
    <property type="hits" value="0 hits in 10 CRISPR screens"/>
</dbReference>
<dbReference type="EvolutionaryTrace" id="P40040"/>
<dbReference type="PRO" id="PR:P40040"/>
<dbReference type="Proteomes" id="UP000002311">
    <property type="component" value="Chromosome V"/>
</dbReference>
<dbReference type="RNAct" id="P40040">
    <property type="molecule type" value="protein"/>
</dbReference>
<dbReference type="GO" id="GO:0005634">
    <property type="term" value="C:nucleus"/>
    <property type="evidence" value="ECO:0007005"/>
    <property type="project" value="SGD"/>
</dbReference>
<dbReference type="GO" id="GO:0003682">
    <property type="term" value="F:chromatin binding"/>
    <property type="evidence" value="ECO:0000314"/>
    <property type="project" value="SGD"/>
</dbReference>
<dbReference type="GO" id="GO:0003690">
    <property type="term" value="F:double-stranded DNA binding"/>
    <property type="evidence" value="ECO:0000314"/>
    <property type="project" value="SGD"/>
</dbReference>
<dbReference type="GO" id="GO:0003723">
    <property type="term" value="F:RNA binding"/>
    <property type="evidence" value="ECO:0000314"/>
    <property type="project" value="SGD"/>
</dbReference>
<dbReference type="GO" id="GO:0016973">
    <property type="term" value="P:poly(A)+ mRNA export from nucleus"/>
    <property type="evidence" value="ECO:0000316"/>
    <property type="project" value="SGD"/>
</dbReference>
<dbReference type="GO" id="GO:0022618">
    <property type="term" value="P:protein-RNA complex assembly"/>
    <property type="evidence" value="ECO:0000315"/>
    <property type="project" value="SGD"/>
</dbReference>
<dbReference type="GO" id="GO:0006368">
    <property type="term" value="P:transcription elongation by RNA polymerase II"/>
    <property type="evidence" value="ECO:0000316"/>
    <property type="project" value="SGD"/>
</dbReference>
<dbReference type="FunFam" id="1.10.720.30:FF:000025">
    <property type="entry name" value="Protein THO1"/>
    <property type="match status" value="1"/>
</dbReference>
<dbReference type="Gene3D" id="1.10.720.30">
    <property type="entry name" value="SAP domain"/>
    <property type="match status" value="1"/>
</dbReference>
<dbReference type="InterPro" id="IPR003034">
    <property type="entry name" value="SAP_dom"/>
</dbReference>
<dbReference type="InterPro" id="IPR036361">
    <property type="entry name" value="SAP_dom_sf"/>
</dbReference>
<dbReference type="InterPro" id="IPR052240">
    <property type="entry name" value="SAP_domain_ribonucleoprotein"/>
</dbReference>
<dbReference type="InterPro" id="IPR040746">
    <property type="entry name" value="THO1_MOS11_C"/>
</dbReference>
<dbReference type="PANTHER" id="PTHR46551">
    <property type="entry name" value="SAP DOMAIN-CONTAINING RIBONUCLEOPROTEIN"/>
    <property type="match status" value="1"/>
</dbReference>
<dbReference type="PANTHER" id="PTHR46551:SF1">
    <property type="entry name" value="SAP DOMAIN-CONTAINING RIBONUCLEOPROTEIN"/>
    <property type="match status" value="1"/>
</dbReference>
<dbReference type="Pfam" id="PF02037">
    <property type="entry name" value="SAP"/>
    <property type="match status" value="1"/>
</dbReference>
<dbReference type="Pfam" id="PF18592">
    <property type="entry name" value="Tho1_MOS11_C"/>
    <property type="match status" value="1"/>
</dbReference>
<dbReference type="SMART" id="SM00513">
    <property type="entry name" value="SAP"/>
    <property type="match status" value="1"/>
</dbReference>
<dbReference type="SUPFAM" id="SSF68906">
    <property type="entry name" value="SAP domain"/>
    <property type="match status" value="1"/>
</dbReference>
<dbReference type="PROSITE" id="PS50800">
    <property type="entry name" value="SAP"/>
    <property type="match status" value="1"/>
</dbReference>
<name>THO1_YEAST</name>
<proteinExistence type="evidence at protein level"/>
<accession>P40040</accession>
<accession>D3DLW8</accession>